<name>CLPX_STAAT</name>
<sequence>MFKFNEDEENLKCSFCGKDQDQVKKLVAGSGVYICNECIELCSEIVEEELAQNTSEAMTELPTPKEIMDHLNEYVIGQEKAKKSLAVAVYNHYKRIQQLGPKEDDVELQKSNIALIGPTGSGKTLLAQTLAKTLNVPFAIADATSLTEAGYVGDDVENILLRLIQAADFDIDKAEKGIIYVDEIDKIARKSENTSITRDVSGEGVQQALLKILEGTTASVPPQGGRKHPNQEMIQIDTTNILFILGGAFDGIEEVIKRRLGEKVIGFSSNEADKYDEQALLAQIRPEDLQAYGLIPEFIGRVPIVANLETLDVTALKNILTQPKNALVKQYTKMLELDDVDLEFTEEALSAISEKAIERKTGARGLRSIIEESLIDIMFDVPSNENVTKVVITAQTINEETEPELYDAEGNLINNSKTSA</sequence>
<gene>
    <name evidence="1" type="primary">clpX</name>
    <name type="ordered locus">USA300HOU_1666</name>
</gene>
<protein>
    <recommendedName>
        <fullName evidence="1">ATP-dependent Clp protease ATP-binding subunit ClpX</fullName>
    </recommendedName>
</protein>
<reference key="1">
    <citation type="journal article" date="2007" name="BMC Microbiol.">
        <title>Subtle genetic changes enhance virulence of methicillin resistant and sensitive Staphylococcus aureus.</title>
        <authorList>
            <person name="Highlander S.K."/>
            <person name="Hulten K.G."/>
            <person name="Qin X."/>
            <person name="Jiang H."/>
            <person name="Yerrapragada S."/>
            <person name="Mason E.O. Jr."/>
            <person name="Shang Y."/>
            <person name="Williams T.M."/>
            <person name="Fortunov R.M."/>
            <person name="Liu Y."/>
            <person name="Igboeli O."/>
            <person name="Petrosino J."/>
            <person name="Tirumalai M."/>
            <person name="Uzman A."/>
            <person name="Fox G.E."/>
            <person name="Cardenas A.M."/>
            <person name="Muzny D.M."/>
            <person name="Hemphill L."/>
            <person name="Ding Y."/>
            <person name="Dugan S."/>
            <person name="Blyth P.R."/>
            <person name="Buhay C.J."/>
            <person name="Dinh H.H."/>
            <person name="Hawes A.C."/>
            <person name="Holder M."/>
            <person name="Kovar C.L."/>
            <person name="Lee S.L."/>
            <person name="Liu W."/>
            <person name="Nazareth L.V."/>
            <person name="Wang Q."/>
            <person name="Zhou J."/>
            <person name="Kaplan S.L."/>
            <person name="Weinstock G.M."/>
        </authorList>
    </citation>
    <scope>NUCLEOTIDE SEQUENCE [LARGE SCALE GENOMIC DNA]</scope>
    <source>
        <strain>USA300 / TCH1516</strain>
    </source>
</reference>
<proteinExistence type="inferred from homology"/>
<dbReference type="EMBL" id="CP000730">
    <property type="protein sequence ID" value="ABX29673.1"/>
    <property type="molecule type" value="Genomic_DNA"/>
</dbReference>
<dbReference type="RefSeq" id="WP_000472302.1">
    <property type="nucleotide sequence ID" value="NC_010079.1"/>
</dbReference>
<dbReference type="SMR" id="A8Z2J5"/>
<dbReference type="KEGG" id="sax:USA300HOU_1666"/>
<dbReference type="HOGENOM" id="CLU_014218_8_2_9"/>
<dbReference type="GO" id="GO:0009376">
    <property type="term" value="C:HslUV protease complex"/>
    <property type="evidence" value="ECO:0007669"/>
    <property type="project" value="TreeGrafter"/>
</dbReference>
<dbReference type="GO" id="GO:0005524">
    <property type="term" value="F:ATP binding"/>
    <property type="evidence" value="ECO:0007669"/>
    <property type="project" value="UniProtKB-UniRule"/>
</dbReference>
<dbReference type="GO" id="GO:0016887">
    <property type="term" value="F:ATP hydrolysis activity"/>
    <property type="evidence" value="ECO:0007669"/>
    <property type="project" value="InterPro"/>
</dbReference>
<dbReference type="GO" id="GO:0140662">
    <property type="term" value="F:ATP-dependent protein folding chaperone"/>
    <property type="evidence" value="ECO:0007669"/>
    <property type="project" value="InterPro"/>
</dbReference>
<dbReference type="GO" id="GO:0046983">
    <property type="term" value="F:protein dimerization activity"/>
    <property type="evidence" value="ECO:0007669"/>
    <property type="project" value="InterPro"/>
</dbReference>
<dbReference type="GO" id="GO:0051082">
    <property type="term" value="F:unfolded protein binding"/>
    <property type="evidence" value="ECO:0007669"/>
    <property type="project" value="UniProtKB-UniRule"/>
</dbReference>
<dbReference type="GO" id="GO:0008270">
    <property type="term" value="F:zinc ion binding"/>
    <property type="evidence" value="ECO:0007669"/>
    <property type="project" value="InterPro"/>
</dbReference>
<dbReference type="GO" id="GO:0051301">
    <property type="term" value="P:cell division"/>
    <property type="evidence" value="ECO:0007669"/>
    <property type="project" value="TreeGrafter"/>
</dbReference>
<dbReference type="GO" id="GO:0051603">
    <property type="term" value="P:proteolysis involved in protein catabolic process"/>
    <property type="evidence" value="ECO:0007669"/>
    <property type="project" value="TreeGrafter"/>
</dbReference>
<dbReference type="CDD" id="cd19497">
    <property type="entry name" value="RecA-like_ClpX"/>
    <property type="match status" value="1"/>
</dbReference>
<dbReference type="FunFam" id="1.10.8.60:FF:000002">
    <property type="entry name" value="ATP-dependent Clp protease ATP-binding subunit ClpX"/>
    <property type="match status" value="1"/>
</dbReference>
<dbReference type="FunFam" id="3.40.50.300:FF:000005">
    <property type="entry name" value="ATP-dependent Clp protease ATP-binding subunit ClpX"/>
    <property type="match status" value="1"/>
</dbReference>
<dbReference type="Gene3D" id="1.10.8.60">
    <property type="match status" value="1"/>
</dbReference>
<dbReference type="Gene3D" id="6.20.220.10">
    <property type="entry name" value="ClpX chaperone, C4-type zinc finger domain"/>
    <property type="match status" value="1"/>
</dbReference>
<dbReference type="Gene3D" id="3.40.50.300">
    <property type="entry name" value="P-loop containing nucleotide triphosphate hydrolases"/>
    <property type="match status" value="1"/>
</dbReference>
<dbReference type="HAMAP" id="MF_00175">
    <property type="entry name" value="ClpX"/>
    <property type="match status" value="1"/>
</dbReference>
<dbReference type="InterPro" id="IPR003593">
    <property type="entry name" value="AAA+_ATPase"/>
</dbReference>
<dbReference type="InterPro" id="IPR050052">
    <property type="entry name" value="ATP-dep_Clp_protease_ClpX"/>
</dbReference>
<dbReference type="InterPro" id="IPR003959">
    <property type="entry name" value="ATPase_AAA_core"/>
</dbReference>
<dbReference type="InterPro" id="IPR019489">
    <property type="entry name" value="Clp_ATPase_C"/>
</dbReference>
<dbReference type="InterPro" id="IPR004487">
    <property type="entry name" value="Clp_protease_ATP-bd_su_ClpX"/>
</dbReference>
<dbReference type="InterPro" id="IPR046425">
    <property type="entry name" value="ClpX_bact"/>
</dbReference>
<dbReference type="InterPro" id="IPR027417">
    <property type="entry name" value="P-loop_NTPase"/>
</dbReference>
<dbReference type="InterPro" id="IPR010603">
    <property type="entry name" value="Znf_CppX_C4"/>
</dbReference>
<dbReference type="InterPro" id="IPR038366">
    <property type="entry name" value="Znf_CppX_C4_sf"/>
</dbReference>
<dbReference type="NCBIfam" id="TIGR00382">
    <property type="entry name" value="clpX"/>
    <property type="match status" value="1"/>
</dbReference>
<dbReference type="NCBIfam" id="NF003745">
    <property type="entry name" value="PRK05342.1"/>
    <property type="match status" value="1"/>
</dbReference>
<dbReference type="PANTHER" id="PTHR48102:SF7">
    <property type="entry name" value="ATP-DEPENDENT CLP PROTEASE ATP-BINDING SUBUNIT CLPX-LIKE, MITOCHONDRIAL"/>
    <property type="match status" value="1"/>
</dbReference>
<dbReference type="PANTHER" id="PTHR48102">
    <property type="entry name" value="ATP-DEPENDENT CLP PROTEASE ATP-BINDING SUBUNIT CLPX-LIKE, MITOCHONDRIAL-RELATED"/>
    <property type="match status" value="1"/>
</dbReference>
<dbReference type="Pfam" id="PF07724">
    <property type="entry name" value="AAA_2"/>
    <property type="match status" value="1"/>
</dbReference>
<dbReference type="Pfam" id="PF10431">
    <property type="entry name" value="ClpB_D2-small"/>
    <property type="match status" value="1"/>
</dbReference>
<dbReference type="Pfam" id="PF06689">
    <property type="entry name" value="zf-C4_ClpX"/>
    <property type="match status" value="1"/>
</dbReference>
<dbReference type="SMART" id="SM00382">
    <property type="entry name" value="AAA"/>
    <property type="match status" value="1"/>
</dbReference>
<dbReference type="SMART" id="SM01086">
    <property type="entry name" value="ClpB_D2-small"/>
    <property type="match status" value="1"/>
</dbReference>
<dbReference type="SMART" id="SM00994">
    <property type="entry name" value="zf-C4_ClpX"/>
    <property type="match status" value="1"/>
</dbReference>
<dbReference type="SUPFAM" id="SSF57716">
    <property type="entry name" value="Glucocorticoid receptor-like (DNA-binding domain)"/>
    <property type="match status" value="1"/>
</dbReference>
<dbReference type="SUPFAM" id="SSF52540">
    <property type="entry name" value="P-loop containing nucleoside triphosphate hydrolases"/>
    <property type="match status" value="1"/>
</dbReference>
<dbReference type="PROSITE" id="PS51902">
    <property type="entry name" value="CLPX_ZB"/>
    <property type="match status" value="1"/>
</dbReference>
<feature type="chain" id="PRO_1000077181" description="ATP-dependent Clp protease ATP-binding subunit ClpX">
    <location>
        <begin position="1"/>
        <end position="420"/>
    </location>
</feature>
<feature type="domain" description="ClpX-type ZB" evidence="2">
    <location>
        <begin position="1"/>
        <end position="54"/>
    </location>
</feature>
<feature type="binding site" evidence="2">
    <location>
        <position position="13"/>
    </location>
    <ligand>
        <name>Zn(2+)</name>
        <dbReference type="ChEBI" id="CHEBI:29105"/>
    </ligand>
</feature>
<feature type="binding site" evidence="2">
    <location>
        <position position="16"/>
    </location>
    <ligand>
        <name>Zn(2+)</name>
        <dbReference type="ChEBI" id="CHEBI:29105"/>
    </ligand>
</feature>
<feature type="binding site" evidence="2">
    <location>
        <position position="35"/>
    </location>
    <ligand>
        <name>Zn(2+)</name>
        <dbReference type="ChEBI" id="CHEBI:29105"/>
    </ligand>
</feature>
<feature type="binding site" evidence="2">
    <location>
        <position position="38"/>
    </location>
    <ligand>
        <name>Zn(2+)</name>
        <dbReference type="ChEBI" id="CHEBI:29105"/>
    </ligand>
</feature>
<feature type="binding site" evidence="1">
    <location>
        <begin position="118"/>
        <end position="125"/>
    </location>
    <ligand>
        <name>ATP</name>
        <dbReference type="ChEBI" id="CHEBI:30616"/>
    </ligand>
</feature>
<evidence type="ECO:0000255" key="1">
    <source>
        <dbReference type="HAMAP-Rule" id="MF_00175"/>
    </source>
</evidence>
<evidence type="ECO:0000255" key="2">
    <source>
        <dbReference type="PROSITE-ProRule" id="PRU01250"/>
    </source>
</evidence>
<keyword id="KW-0067">ATP-binding</keyword>
<keyword id="KW-0143">Chaperone</keyword>
<keyword id="KW-0479">Metal-binding</keyword>
<keyword id="KW-0547">Nucleotide-binding</keyword>
<keyword id="KW-0862">Zinc</keyword>
<comment type="function">
    <text evidence="1">ATP-dependent specificity component of the Clp protease. It directs the protease to specific substrates. Can perform chaperone functions in the absence of ClpP.</text>
</comment>
<comment type="subunit">
    <text evidence="1">Component of the ClpX-ClpP complex. Forms a hexameric ring that, in the presence of ATP, binds to fourteen ClpP subunits assembled into a disk-like structure with a central cavity, resembling the structure of eukaryotic proteasomes.</text>
</comment>
<comment type="similarity">
    <text evidence="1">Belongs to the ClpX chaperone family.</text>
</comment>
<organism>
    <name type="scientific">Staphylococcus aureus (strain USA300 / TCH1516)</name>
    <dbReference type="NCBI Taxonomy" id="451516"/>
    <lineage>
        <taxon>Bacteria</taxon>
        <taxon>Bacillati</taxon>
        <taxon>Bacillota</taxon>
        <taxon>Bacilli</taxon>
        <taxon>Bacillales</taxon>
        <taxon>Staphylococcaceae</taxon>
        <taxon>Staphylococcus</taxon>
    </lineage>
</organism>
<accession>A8Z2J5</accession>